<dbReference type="EMBL" id="AF001308">
    <property type="protein sequence ID" value="AAC78710.1"/>
    <property type="molecule type" value="Genomic_DNA"/>
</dbReference>
<dbReference type="EMBL" id="AF075597">
    <property type="protein sequence ID" value="AAC28179.1"/>
    <property type="status" value="ALT_SEQ"/>
    <property type="molecule type" value="Genomic_DNA"/>
</dbReference>
<dbReference type="EMBL" id="AL161494">
    <property type="protein sequence ID" value="CAB80713.1"/>
    <property type="molecule type" value="Genomic_DNA"/>
</dbReference>
<dbReference type="EMBL" id="CP002687">
    <property type="protein sequence ID" value="AEE82137.1"/>
    <property type="molecule type" value="Genomic_DNA"/>
</dbReference>
<dbReference type="EMBL" id="CP002687">
    <property type="protein sequence ID" value="AEE82138.1"/>
    <property type="molecule type" value="Genomic_DNA"/>
</dbReference>
<dbReference type="EMBL" id="AK118998">
    <property type="protein sequence ID" value="BAC43574.1"/>
    <property type="molecule type" value="mRNA"/>
</dbReference>
<dbReference type="EMBL" id="AF325102">
    <property type="protein sequence ID" value="AAK17170.1"/>
    <property type="molecule type" value="mRNA"/>
</dbReference>
<dbReference type="EMBL" id="BT024920">
    <property type="protein sequence ID" value="ABD94076.1"/>
    <property type="molecule type" value="mRNA"/>
</dbReference>
<dbReference type="PIR" id="T01522">
    <property type="entry name" value="T01522"/>
</dbReference>
<dbReference type="RefSeq" id="NP_192129.1">
    <molecule id="O04259-1"/>
    <property type="nucleotide sequence ID" value="NM_116453.2"/>
</dbReference>
<dbReference type="RefSeq" id="NP_849286.1">
    <molecule id="O04259-2"/>
    <property type="nucleotide sequence ID" value="NM_178955.1"/>
</dbReference>
<dbReference type="STRING" id="3702.O04259"/>
<dbReference type="iPTMnet" id="O04259"/>
<dbReference type="PaxDb" id="3702-AT4G02200.3"/>
<dbReference type="DNASU" id="827516"/>
<dbReference type="EnsemblPlants" id="AT4G02200.1">
    <molecule id="O04259-1"/>
    <property type="protein sequence ID" value="AT4G02200.1"/>
    <property type="gene ID" value="AT4G02200"/>
</dbReference>
<dbReference type="EnsemblPlants" id="AT4G02200.2">
    <molecule id="O04259-2"/>
    <property type="protein sequence ID" value="AT4G02200.2"/>
    <property type="gene ID" value="AT4G02200"/>
</dbReference>
<dbReference type="GeneID" id="827516"/>
<dbReference type="Gramene" id="AT4G02200.1">
    <molecule id="O04259-1"/>
    <property type="protein sequence ID" value="AT4G02200.1"/>
    <property type="gene ID" value="AT4G02200"/>
</dbReference>
<dbReference type="Gramene" id="AT4G02200.2">
    <molecule id="O04259-2"/>
    <property type="protein sequence ID" value="AT4G02200.2"/>
    <property type="gene ID" value="AT4G02200"/>
</dbReference>
<dbReference type="KEGG" id="ath:AT4G02200"/>
<dbReference type="Araport" id="AT4G02200"/>
<dbReference type="TAIR" id="AT4G02200"/>
<dbReference type="eggNOG" id="ENOG502SN10">
    <property type="taxonomic scope" value="Eukaryota"/>
</dbReference>
<dbReference type="HOGENOM" id="CLU_072240_0_1_1"/>
<dbReference type="InParanoid" id="O04259"/>
<dbReference type="OMA" id="CCHIDLD"/>
<dbReference type="OrthoDB" id="6270329at2759"/>
<dbReference type="PhylomeDB" id="O04259"/>
<dbReference type="PRO" id="PR:O04259"/>
<dbReference type="Proteomes" id="UP000006548">
    <property type="component" value="Chromosome 4"/>
</dbReference>
<dbReference type="ExpressionAtlas" id="O04259">
    <property type="expression patterns" value="baseline and differential"/>
</dbReference>
<dbReference type="GO" id="GO:0005634">
    <property type="term" value="C:nucleus"/>
    <property type="evidence" value="ECO:0007669"/>
    <property type="project" value="UniProtKB-SubCell"/>
</dbReference>
<dbReference type="InterPro" id="IPR033347">
    <property type="entry name" value="DI19"/>
</dbReference>
<dbReference type="InterPro" id="IPR027935">
    <property type="entry name" value="Di19_C"/>
</dbReference>
<dbReference type="InterPro" id="IPR008598">
    <property type="entry name" value="Di19_Zn-bd"/>
</dbReference>
<dbReference type="PANTHER" id="PTHR31875">
    <property type="entry name" value="PROTEIN DEHYDRATION-INDUCED 19"/>
    <property type="match status" value="1"/>
</dbReference>
<dbReference type="PANTHER" id="PTHR31875:SF43">
    <property type="entry name" value="PROTEIN DEHYDRATION-INDUCED 19 HOMOLOG 5"/>
    <property type="match status" value="1"/>
</dbReference>
<dbReference type="Pfam" id="PF14571">
    <property type="entry name" value="Di19_C"/>
    <property type="match status" value="1"/>
</dbReference>
<dbReference type="Pfam" id="PF05605">
    <property type="entry name" value="zf-Di19"/>
    <property type="match status" value="1"/>
</dbReference>
<name>DI195_ARATH</name>
<feature type="chain" id="PRO_0000304417" description="Protein DEHYDRATION-INDUCED 19 homolog 5">
    <location>
        <begin position="1"/>
        <end position="214"/>
    </location>
</feature>
<feature type="region of interest" description="Disordered" evidence="2">
    <location>
        <begin position="148"/>
        <end position="185"/>
    </location>
</feature>
<feature type="compositionally biased region" description="Polar residues" evidence="2">
    <location>
        <begin position="156"/>
        <end position="166"/>
    </location>
</feature>
<feature type="compositionally biased region" description="Basic and acidic residues" evidence="2">
    <location>
        <begin position="168"/>
        <end position="179"/>
    </location>
</feature>
<feature type="modified residue" description="Phosphoserine" evidence="1">
    <location>
        <position position="110"/>
    </location>
</feature>
<feature type="splice variant" id="VSP_034049" description="In isoform 2." evidence="4">
    <original>GLISSAIFDHIYNF</original>
    <variation>AHNPQVT</variation>
    <location>
        <begin position="201"/>
        <end position="214"/>
    </location>
</feature>
<sequence>MEEDLLGICGFDSSKKYRLEELAKYQSGSCIEFEDDDEMAVDYPCPFCSDDYDLVELCHHIDEEHQLDANNGICPVCSRRVKMHMVDHITTQHRDVFKRLYKDESYSAFSPGTRKYLQSLIDEPLSTNHTSKSVLDPLLSFIYNPPSPKKSKLVQPDSSSEASMEDNSLIRDSTEKDWESPSPLSDTELLEKAKKREFVQGLISSAIFDHIYNF</sequence>
<protein>
    <recommendedName>
        <fullName>Protein DEHYDRATION-INDUCED 19 homolog 5</fullName>
        <shortName>AtDi19-5</shortName>
    </recommendedName>
</protein>
<keyword id="KW-0025">Alternative splicing</keyword>
<keyword id="KW-0539">Nucleus</keyword>
<keyword id="KW-0597">Phosphoprotein</keyword>
<keyword id="KW-1185">Reference proteome</keyword>
<gene>
    <name type="primary">DI19-5</name>
    <name type="ordered locus">At4g02200</name>
    <name type="ORF">T10M13.20</name>
    <name type="ORF">T2H3.13</name>
</gene>
<reference key="1">
    <citation type="journal article" date="1999" name="Nature">
        <title>Sequence and analysis of chromosome 4 of the plant Arabidopsis thaliana.</title>
        <authorList>
            <person name="Mayer K.F.X."/>
            <person name="Schueller C."/>
            <person name="Wambutt R."/>
            <person name="Murphy G."/>
            <person name="Volckaert G."/>
            <person name="Pohl T."/>
            <person name="Duesterhoeft A."/>
            <person name="Stiekema W."/>
            <person name="Entian K.-D."/>
            <person name="Terryn N."/>
            <person name="Harris B."/>
            <person name="Ansorge W."/>
            <person name="Brandt P."/>
            <person name="Grivell L.A."/>
            <person name="Rieger M."/>
            <person name="Weichselgartner M."/>
            <person name="de Simone V."/>
            <person name="Obermaier B."/>
            <person name="Mache R."/>
            <person name="Mueller M."/>
            <person name="Kreis M."/>
            <person name="Delseny M."/>
            <person name="Puigdomenech P."/>
            <person name="Watson M."/>
            <person name="Schmidtheini T."/>
            <person name="Reichert B."/>
            <person name="Portetelle D."/>
            <person name="Perez-Alonso M."/>
            <person name="Boutry M."/>
            <person name="Bancroft I."/>
            <person name="Vos P."/>
            <person name="Hoheisel J."/>
            <person name="Zimmermann W."/>
            <person name="Wedler H."/>
            <person name="Ridley P."/>
            <person name="Langham S.-A."/>
            <person name="McCullagh B."/>
            <person name="Bilham L."/>
            <person name="Robben J."/>
            <person name="van der Schueren J."/>
            <person name="Grymonprez B."/>
            <person name="Chuang Y.-J."/>
            <person name="Vandenbussche F."/>
            <person name="Braeken M."/>
            <person name="Weltjens I."/>
            <person name="Voet M."/>
            <person name="Bastiaens I."/>
            <person name="Aert R."/>
            <person name="Defoor E."/>
            <person name="Weitzenegger T."/>
            <person name="Bothe G."/>
            <person name="Ramsperger U."/>
            <person name="Hilbert H."/>
            <person name="Braun M."/>
            <person name="Holzer E."/>
            <person name="Brandt A."/>
            <person name="Peters S."/>
            <person name="van Staveren M."/>
            <person name="Dirkse W."/>
            <person name="Mooijman P."/>
            <person name="Klein Lankhorst R."/>
            <person name="Rose M."/>
            <person name="Hauf J."/>
            <person name="Koetter P."/>
            <person name="Berneiser S."/>
            <person name="Hempel S."/>
            <person name="Feldpausch M."/>
            <person name="Lamberth S."/>
            <person name="Van den Daele H."/>
            <person name="De Keyser A."/>
            <person name="Buysshaert C."/>
            <person name="Gielen J."/>
            <person name="Villarroel R."/>
            <person name="De Clercq R."/>
            <person name="van Montagu M."/>
            <person name="Rogers J."/>
            <person name="Cronin A."/>
            <person name="Quail M.A."/>
            <person name="Bray-Allen S."/>
            <person name="Clark L."/>
            <person name="Doggett J."/>
            <person name="Hall S."/>
            <person name="Kay M."/>
            <person name="Lennard N."/>
            <person name="McLay K."/>
            <person name="Mayes R."/>
            <person name="Pettett A."/>
            <person name="Rajandream M.A."/>
            <person name="Lyne M."/>
            <person name="Benes V."/>
            <person name="Rechmann S."/>
            <person name="Borkova D."/>
            <person name="Bloecker H."/>
            <person name="Scharfe M."/>
            <person name="Grimm M."/>
            <person name="Loehnert T.-H."/>
            <person name="Dose S."/>
            <person name="de Haan M."/>
            <person name="Maarse A.C."/>
            <person name="Schaefer M."/>
            <person name="Mueller-Auer S."/>
            <person name="Gabel C."/>
            <person name="Fuchs M."/>
            <person name="Fartmann B."/>
            <person name="Granderath K."/>
            <person name="Dauner D."/>
            <person name="Herzl A."/>
            <person name="Neumann S."/>
            <person name="Argiriou A."/>
            <person name="Vitale D."/>
            <person name="Liguori R."/>
            <person name="Piravandi E."/>
            <person name="Massenet O."/>
            <person name="Quigley F."/>
            <person name="Clabauld G."/>
            <person name="Muendlein A."/>
            <person name="Felber R."/>
            <person name="Schnabl S."/>
            <person name="Hiller R."/>
            <person name="Schmidt W."/>
            <person name="Lecharny A."/>
            <person name="Aubourg S."/>
            <person name="Chefdor F."/>
            <person name="Cooke R."/>
            <person name="Berger C."/>
            <person name="Monfort A."/>
            <person name="Casacuberta E."/>
            <person name="Gibbons T."/>
            <person name="Weber N."/>
            <person name="Vandenbol M."/>
            <person name="Bargues M."/>
            <person name="Terol J."/>
            <person name="Torres A."/>
            <person name="Perez-Perez A."/>
            <person name="Purnelle B."/>
            <person name="Bent E."/>
            <person name="Johnson S."/>
            <person name="Tacon D."/>
            <person name="Jesse T."/>
            <person name="Heijnen L."/>
            <person name="Schwarz S."/>
            <person name="Scholler P."/>
            <person name="Heber S."/>
            <person name="Francs P."/>
            <person name="Bielke C."/>
            <person name="Frishman D."/>
            <person name="Haase D."/>
            <person name="Lemcke K."/>
            <person name="Mewes H.-W."/>
            <person name="Stocker S."/>
            <person name="Zaccaria P."/>
            <person name="Bevan M."/>
            <person name="Wilson R.K."/>
            <person name="de la Bastide M."/>
            <person name="Habermann K."/>
            <person name="Parnell L."/>
            <person name="Dedhia N."/>
            <person name="Gnoj L."/>
            <person name="Schutz K."/>
            <person name="Huang E."/>
            <person name="Spiegel L."/>
            <person name="Sekhon M."/>
            <person name="Murray J."/>
            <person name="Sheet P."/>
            <person name="Cordes M."/>
            <person name="Abu-Threideh J."/>
            <person name="Stoneking T."/>
            <person name="Kalicki J."/>
            <person name="Graves T."/>
            <person name="Harmon G."/>
            <person name="Edwards J."/>
            <person name="Latreille P."/>
            <person name="Courtney L."/>
            <person name="Cloud J."/>
            <person name="Abbott A."/>
            <person name="Scott K."/>
            <person name="Johnson D."/>
            <person name="Minx P."/>
            <person name="Bentley D."/>
            <person name="Fulton B."/>
            <person name="Miller N."/>
            <person name="Greco T."/>
            <person name="Kemp K."/>
            <person name="Kramer J."/>
            <person name="Fulton L."/>
            <person name="Mardis E."/>
            <person name="Dante M."/>
            <person name="Pepin K."/>
            <person name="Hillier L.W."/>
            <person name="Nelson J."/>
            <person name="Spieth J."/>
            <person name="Ryan E."/>
            <person name="Andrews S."/>
            <person name="Geisel C."/>
            <person name="Layman D."/>
            <person name="Du H."/>
            <person name="Ali J."/>
            <person name="Berghoff A."/>
            <person name="Jones K."/>
            <person name="Drone K."/>
            <person name="Cotton M."/>
            <person name="Joshu C."/>
            <person name="Antonoiu B."/>
            <person name="Zidanic M."/>
            <person name="Strong C."/>
            <person name="Sun H."/>
            <person name="Lamar B."/>
            <person name="Yordan C."/>
            <person name="Ma P."/>
            <person name="Zhong J."/>
            <person name="Preston R."/>
            <person name="Vil D."/>
            <person name="Shekher M."/>
            <person name="Matero A."/>
            <person name="Shah R."/>
            <person name="Swaby I.K."/>
            <person name="O'Shaughnessy A."/>
            <person name="Rodriguez M."/>
            <person name="Hoffman J."/>
            <person name="Till S."/>
            <person name="Granat S."/>
            <person name="Shohdy N."/>
            <person name="Hasegawa A."/>
            <person name="Hameed A."/>
            <person name="Lodhi M."/>
            <person name="Johnson A."/>
            <person name="Chen E."/>
            <person name="Marra M.A."/>
            <person name="Martienssen R."/>
            <person name="McCombie W.R."/>
        </authorList>
    </citation>
    <scope>NUCLEOTIDE SEQUENCE [LARGE SCALE GENOMIC DNA]</scope>
    <source>
        <strain>cv. Columbia</strain>
    </source>
</reference>
<reference key="2">
    <citation type="journal article" date="2017" name="Plant J.">
        <title>Araport11: a complete reannotation of the Arabidopsis thaliana reference genome.</title>
        <authorList>
            <person name="Cheng C.Y."/>
            <person name="Krishnakumar V."/>
            <person name="Chan A.P."/>
            <person name="Thibaud-Nissen F."/>
            <person name="Schobel S."/>
            <person name="Town C.D."/>
        </authorList>
    </citation>
    <scope>GENOME REANNOTATION</scope>
    <source>
        <strain>cv. Columbia</strain>
    </source>
</reference>
<reference key="3">
    <citation type="journal article" date="2002" name="Science">
        <title>Functional annotation of a full-length Arabidopsis cDNA collection.</title>
        <authorList>
            <person name="Seki M."/>
            <person name="Narusaka M."/>
            <person name="Kamiya A."/>
            <person name="Ishida J."/>
            <person name="Satou M."/>
            <person name="Sakurai T."/>
            <person name="Nakajima M."/>
            <person name="Enju A."/>
            <person name="Akiyama K."/>
            <person name="Oono Y."/>
            <person name="Muramatsu M."/>
            <person name="Hayashizaki Y."/>
            <person name="Kawai J."/>
            <person name="Carninci P."/>
            <person name="Itoh M."/>
            <person name="Ishii Y."/>
            <person name="Arakawa T."/>
            <person name="Shibata K."/>
            <person name="Shinagawa A."/>
            <person name="Shinozaki K."/>
        </authorList>
    </citation>
    <scope>NUCLEOTIDE SEQUENCE [LARGE SCALE MRNA]</scope>
    <source>
        <strain>cv. Columbia</strain>
    </source>
</reference>
<reference key="4">
    <citation type="journal article" date="2003" name="Science">
        <title>Empirical analysis of transcriptional activity in the Arabidopsis genome.</title>
        <authorList>
            <person name="Yamada K."/>
            <person name="Lim J."/>
            <person name="Dale J.M."/>
            <person name="Chen H."/>
            <person name="Shinn P."/>
            <person name="Palm C.J."/>
            <person name="Southwick A.M."/>
            <person name="Wu H.C."/>
            <person name="Kim C.J."/>
            <person name="Nguyen M."/>
            <person name="Pham P.K."/>
            <person name="Cheuk R.F."/>
            <person name="Karlin-Newmann G."/>
            <person name="Liu S.X."/>
            <person name="Lam B."/>
            <person name="Sakano H."/>
            <person name="Wu T."/>
            <person name="Yu G."/>
            <person name="Miranda M."/>
            <person name="Quach H.L."/>
            <person name="Tripp M."/>
            <person name="Chang C.H."/>
            <person name="Lee J.M."/>
            <person name="Toriumi M.J."/>
            <person name="Chan M.M."/>
            <person name="Tang C.C."/>
            <person name="Onodera C.S."/>
            <person name="Deng J.M."/>
            <person name="Akiyama K."/>
            <person name="Ansari Y."/>
            <person name="Arakawa T."/>
            <person name="Banh J."/>
            <person name="Banno F."/>
            <person name="Bowser L."/>
            <person name="Brooks S.Y."/>
            <person name="Carninci P."/>
            <person name="Chao Q."/>
            <person name="Choy N."/>
            <person name="Enju A."/>
            <person name="Goldsmith A.D."/>
            <person name="Gurjal M."/>
            <person name="Hansen N.F."/>
            <person name="Hayashizaki Y."/>
            <person name="Johnson-Hopson C."/>
            <person name="Hsuan V.W."/>
            <person name="Iida K."/>
            <person name="Karnes M."/>
            <person name="Khan S."/>
            <person name="Koesema E."/>
            <person name="Ishida J."/>
            <person name="Jiang P.X."/>
            <person name="Jones T."/>
            <person name="Kawai J."/>
            <person name="Kamiya A."/>
            <person name="Meyers C."/>
            <person name="Nakajima M."/>
            <person name="Narusaka M."/>
            <person name="Seki M."/>
            <person name="Sakurai T."/>
            <person name="Satou M."/>
            <person name="Tamse R."/>
            <person name="Vaysberg M."/>
            <person name="Wallender E.K."/>
            <person name="Wong C."/>
            <person name="Yamamura Y."/>
            <person name="Yuan S."/>
            <person name="Shinozaki K."/>
            <person name="Davis R.W."/>
            <person name="Theologis A."/>
            <person name="Ecker J.R."/>
        </authorList>
    </citation>
    <scope>NUCLEOTIDE SEQUENCE [LARGE SCALE MRNA]</scope>
    <source>
        <strain>cv. Columbia</strain>
    </source>
</reference>
<reference key="5">
    <citation type="submission" date="2006-03" db="EMBL/GenBank/DDBJ databases">
        <title>Arabidopsis ORF clones.</title>
        <authorList>
            <person name="Shinn P."/>
            <person name="Chen H."/>
            <person name="Kim C.J."/>
            <person name="Ecker J.R."/>
        </authorList>
    </citation>
    <scope>NUCLEOTIDE SEQUENCE [LARGE SCALE MRNA]</scope>
    <source>
        <strain>cv. Columbia</strain>
    </source>
</reference>
<reference key="6">
    <citation type="journal article" date="2006" name="Plant Mol. Biol.">
        <title>The Arabidopsis AtDi19 gene family encodes a novel type of Cys2/His2 zinc-finger protein implicated in ABA-independent dehydration, high-salinity stress and light signaling pathways.</title>
        <authorList>
            <person name="Rodriguez Milla M.A."/>
            <person name="Townsend J."/>
            <person name="Chang I.-F."/>
            <person name="Cushman J.C."/>
        </authorList>
    </citation>
    <scope>SUBCELLULAR LOCATION</scope>
    <scope>TISSUE SPECIFICITY</scope>
    <scope>PHOSPHORYLATION</scope>
    <scope>GENE FAMILY</scope>
    <scope>NOMENCLATURE</scope>
</reference>
<proteinExistence type="evidence at protein level"/>
<accession>O04259</accession>
<accession>A8MR81</accession>
<accession>Q7G0Q3</accession>
<organism>
    <name type="scientific">Arabidopsis thaliana</name>
    <name type="common">Mouse-ear cress</name>
    <dbReference type="NCBI Taxonomy" id="3702"/>
    <lineage>
        <taxon>Eukaryota</taxon>
        <taxon>Viridiplantae</taxon>
        <taxon>Streptophyta</taxon>
        <taxon>Embryophyta</taxon>
        <taxon>Tracheophyta</taxon>
        <taxon>Spermatophyta</taxon>
        <taxon>Magnoliopsida</taxon>
        <taxon>eudicotyledons</taxon>
        <taxon>Gunneridae</taxon>
        <taxon>Pentapetalae</taxon>
        <taxon>rosids</taxon>
        <taxon>malvids</taxon>
        <taxon>Brassicales</taxon>
        <taxon>Brassicaceae</taxon>
        <taxon>Camelineae</taxon>
        <taxon>Arabidopsis</taxon>
    </lineage>
</organism>
<comment type="subcellular location">
    <subcellularLocation>
        <location evidence="3">Nucleus</location>
    </subcellularLocation>
</comment>
<comment type="alternative products">
    <event type="alternative splicing"/>
    <isoform>
        <id>O04259-1</id>
        <name>1</name>
        <sequence type="displayed"/>
    </isoform>
    <isoform>
        <id>O04259-2</id>
        <name>2</name>
        <sequence type="described" ref="VSP_034049"/>
    </isoform>
</comment>
<comment type="tissue specificity">
    <text evidence="3">Expressed in seedlings, roots, leaves, stems, flowers and siliques.</text>
</comment>
<comment type="induction">
    <text>Not induced by abscisic acid.</text>
</comment>
<comment type="PTM">
    <text evidence="3">Phosphorylated in vitro by CPK3 or CPK11.</text>
</comment>
<comment type="miscellaneous">
    <molecule>Isoform 2</molecule>
    <text evidence="4">May be due to an intron retention.</text>
</comment>
<comment type="similarity">
    <text evidence="4">Belongs to the Di19 family.</text>
</comment>
<comment type="sequence caution" evidence="4">
    <conflict type="erroneous gene model prediction">
        <sequence resource="EMBL-CDS" id="AAC28179"/>
    </conflict>
</comment>
<evidence type="ECO:0000250" key="1">
    <source>
        <dbReference type="UniProtKB" id="Q39083"/>
    </source>
</evidence>
<evidence type="ECO:0000256" key="2">
    <source>
        <dbReference type="SAM" id="MobiDB-lite"/>
    </source>
</evidence>
<evidence type="ECO:0000269" key="3">
    <source>
    </source>
</evidence>
<evidence type="ECO:0000305" key="4"/>